<dbReference type="EMBL" id="CP000058">
    <property type="protein sequence ID" value="AAZ33943.1"/>
    <property type="molecule type" value="Genomic_DNA"/>
</dbReference>
<dbReference type="RefSeq" id="WP_002552524.1">
    <property type="nucleotide sequence ID" value="NC_005773.3"/>
</dbReference>
<dbReference type="SMR" id="Q48LV7"/>
<dbReference type="GeneID" id="96217689"/>
<dbReference type="KEGG" id="psp:PSPPH_1357"/>
<dbReference type="eggNOG" id="COG0335">
    <property type="taxonomic scope" value="Bacteria"/>
</dbReference>
<dbReference type="HOGENOM" id="CLU_103507_1_0_6"/>
<dbReference type="Proteomes" id="UP000000551">
    <property type="component" value="Chromosome"/>
</dbReference>
<dbReference type="GO" id="GO:0022625">
    <property type="term" value="C:cytosolic large ribosomal subunit"/>
    <property type="evidence" value="ECO:0007669"/>
    <property type="project" value="TreeGrafter"/>
</dbReference>
<dbReference type="GO" id="GO:0003735">
    <property type="term" value="F:structural constituent of ribosome"/>
    <property type="evidence" value="ECO:0007669"/>
    <property type="project" value="InterPro"/>
</dbReference>
<dbReference type="GO" id="GO:0006412">
    <property type="term" value="P:translation"/>
    <property type="evidence" value="ECO:0007669"/>
    <property type="project" value="UniProtKB-UniRule"/>
</dbReference>
<dbReference type="FunFam" id="2.30.30.790:FF:000001">
    <property type="entry name" value="50S ribosomal protein L19"/>
    <property type="match status" value="1"/>
</dbReference>
<dbReference type="Gene3D" id="2.30.30.790">
    <property type="match status" value="1"/>
</dbReference>
<dbReference type="HAMAP" id="MF_00402">
    <property type="entry name" value="Ribosomal_bL19"/>
    <property type="match status" value="1"/>
</dbReference>
<dbReference type="InterPro" id="IPR001857">
    <property type="entry name" value="Ribosomal_bL19"/>
</dbReference>
<dbReference type="InterPro" id="IPR018257">
    <property type="entry name" value="Ribosomal_bL19_CS"/>
</dbReference>
<dbReference type="InterPro" id="IPR038657">
    <property type="entry name" value="Ribosomal_bL19_sf"/>
</dbReference>
<dbReference type="InterPro" id="IPR008991">
    <property type="entry name" value="Translation_prot_SH3-like_sf"/>
</dbReference>
<dbReference type="NCBIfam" id="TIGR01024">
    <property type="entry name" value="rplS_bact"/>
    <property type="match status" value="1"/>
</dbReference>
<dbReference type="PANTHER" id="PTHR15680:SF9">
    <property type="entry name" value="LARGE RIBOSOMAL SUBUNIT PROTEIN BL19M"/>
    <property type="match status" value="1"/>
</dbReference>
<dbReference type="PANTHER" id="PTHR15680">
    <property type="entry name" value="RIBOSOMAL PROTEIN L19"/>
    <property type="match status" value="1"/>
</dbReference>
<dbReference type="Pfam" id="PF01245">
    <property type="entry name" value="Ribosomal_L19"/>
    <property type="match status" value="1"/>
</dbReference>
<dbReference type="PIRSF" id="PIRSF002191">
    <property type="entry name" value="Ribosomal_L19"/>
    <property type="match status" value="1"/>
</dbReference>
<dbReference type="PRINTS" id="PR00061">
    <property type="entry name" value="RIBOSOMALL19"/>
</dbReference>
<dbReference type="SUPFAM" id="SSF50104">
    <property type="entry name" value="Translation proteins SH3-like domain"/>
    <property type="match status" value="1"/>
</dbReference>
<dbReference type="PROSITE" id="PS01015">
    <property type="entry name" value="RIBOSOMAL_L19"/>
    <property type="match status" value="1"/>
</dbReference>
<feature type="chain" id="PRO_0000226864" description="Large ribosomal subunit protein bL19">
    <location>
        <begin position="1"/>
        <end position="116"/>
    </location>
</feature>
<reference key="1">
    <citation type="journal article" date="2005" name="J. Bacteriol.">
        <title>Whole-genome sequence analysis of Pseudomonas syringae pv. phaseolicola 1448A reveals divergence among pathovars in genes involved in virulence and transposition.</title>
        <authorList>
            <person name="Joardar V."/>
            <person name="Lindeberg M."/>
            <person name="Jackson R.W."/>
            <person name="Selengut J."/>
            <person name="Dodson R."/>
            <person name="Brinkac L.M."/>
            <person name="Daugherty S.C."/>
            <person name="DeBoy R.T."/>
            <person name="Durkin A.S."/>
            <person name="Gwinn Giglio M."/>
            <person name="Madupu R."/>
            <person name="Nelson W.C."/>
            <person name="Rosovitz M.J."/>
            <person name="Sullivan S.A."/>
            <person name="Crabtree J."/>
            <person name="Creasy T."/>
            <person name="Davidsen T.M."/>
            <person name="Haft D.H."/>
            <person name="Zafar N."/>
            <person name="Zhou L."/>
            <person name="Halpin R."/>
            <person name="Holley T."/>
            <person name="Khouri H.M."/>
            <person name="Feldblyum T.V."/>
            <person name="White O."/>
            <person name="Fraser C.M."/>
            <person name="Chatterjee A.K."/>
            <person name="Cartinhour S."/>
            <person name="Schneider D."/>
            <person name="Mansfield J.W."/>
            <person name="Collmer A."/>
            <person name="Buell R."/>
        </authorList>
    </citation>
    <scope>NUCLEOTIDE SEQUENCE [LARGE SCALE GENOMIC DNA]</scope>
    <source>
        <strain>1448A / Race 6</strain>
    </source>
</reference>
<sequence>MTNKIILALEAEQMTKEIPTFAPGDTIVVQVKVKEGDRARLQAFEGVVIAKRNRGVNSAFTVRKISNGVGVERTFQTYSPQIDSMAVKRRGDVRKAKLYYLRDLSGKAARIKEKLS</sequence>
<accession>Q48LV7</accession>
<evidence type="ECO:0000255" key="1">
    <source>
        <dbReference type="HAMAP-Rule" id="MF_00402"/>
    </source>
</evidence>
<evidence type="ECO:0000305" key="2"/>
<proteinExistence type="inferred from homology"/>
<protein>
    <recommendedName>
        <fullName evidence="1">Large ribosomal subunit protein bL19</fullName>
    </recommendedName>
    <alternativeName>
        <fullName evidence="2">50S ribosomal protein L19</fullName>
    </alternativeName>
</protein>
<keyword id="KW-0687">Ribonucleoprotein</keyword>
<keyword id="KW-0689">Ribosomal protein</keyword>
<name>RL19_PSE14</name>
<comment type="function">
    <text evidence="1">This protein is located at the 30S-50S ribosomal subunit interface and may play a role in the structure and function of the aminoacyl-tRNA binding site.</text>
</comment>
<comment type="similarity">
    <text evidence="1">Belongs to the bacterial ribosomal protein bL19 family.</text>
</comment>
<gene>
    <name evidence="1" type="primary">rplS</name>
    <name type="ordered locus">PSPPH_1357</name>
</gene>
<organism>
    <name type="scientific">Pseudomonas savastanoi pv. phaseolicola (strain 1448A / Race 6)</name>
    <name type="common">Pseudomonas syringae pv. phaseolicola (strain 1448A / Race 6)</name>
    <dbReference type="NCBI Taxonomy" id="264730"/>
    <lineage>
        <taxon>Bacteria</taxon>
        <taxon>Pseudomonadati</taxon>
        <taxon>Pseudomonadota</taxon>
        <taxon>Gammaproteobacteria</taxon>
        <taxon>Pseudomonadales</taxon>
        <taxon>Pseudomonadaceae</taxon>
        <taxon>Pseudomonas</taxon>
    </lineage>
</organism>